<name>MIAB_PHOPR</name>
<reference key="1">
    <citation type="journal article" date="2005" name="Science">
        <title>Life at depth: Photobacterium profundum genome sequence and expression analysis.</title>
        <authorList>
            <person name="Vezzi A."/>
            <person name="Campanaro S."/>
            <person name="D'Angelo M."/>
            <person name="Simonato F."/>
            <person name="Vitulo N."/>
            <person name="Lauro F.M."/>
            <person name="Cestaro A."/>
            <person name="Malacrida G."/>
            <person name="Simionati B."/>
            <person name="Cannata N."/>
            <person name="Romualdi C."/>
            <person name="Bartlett D.H."/>
            <person name="Valle G."/>
        </authorList>
    </citation>
    <scope>NUCLEOTIDE SEQUENCE [LARGE SCALE GENOMIC DNA]</scope>
    <source>
        <strain>ATCC BAA-1253 / SS9</strain>
    </source>
</reference>
<proteinExistence type="inferred from homology"/>
<evidence type="ECO:0000255" key="1">
    <source>
        <dbReference type="HAMAP-Rule" id="MF_01864"/>
    </source>
</evidence>
<evidence type="ECO:0000255" key="2">
    <source>
        <dbReference type="PROSITE-ProRule" id="PRU01266"/>
    </source>
</evidence>
<protein>
    <recommendedName>
        <fullName evidence="1">tRNA-2-methylthio-N(6)-dimethylallyladenosine synthase</fullName>
        <ecNumber evidence="1">2.8.4.3</ecNumber>
    </recommendedName>
    <alternativeName>
        <fullName evidence="1">(Dimethylallyl)adenosine tRNA methylthiotransferase MiaB</fullName>
    </alternativeName>
    <alternativeName>
        <fullName evidence="1">tRNA-i(6)A37 methylthiotransferase</fullName>
    </alternativeName>
</protein>
<gene>
    <name evidence="1" type="primary">miaB</name>
    <name type="ordered locus">PBPRA2878</name>
</gene>
<keyword id="KW-0004">4Fe-4S</keyword>
<keyword id="KW-0963">Cytoplasm</keyword>
<keyword id="KW-0408">Iron</keyword>
<keyword id="KW-0411">Iron-sulfur</keyword>
<keyword id="KW-0479">Metal-binding</keyword>
<keyword id="KW-1185">Reference proteome</keyword>
<keyword id="KW-0949">S-adenosyl-L-methionine</keyword>
<keyword id="KW-0808">Transferase</keyword>
<keyword id="KW-0819">tRNA processing</keyword>
<comment type="function">
    <text evidence="1">Catalyzes the methylthiolation of N6-(dimethylallyl)adenosine (i(6)A), leading to the formation of 2-methylthio-N6-(dimethylallyl)adenosine (ms(2)i(6)A) at position 37 in tRNAs that read codons beginning with uridine.</text>
</comment>
<comment type="catalytic activity">
    <reaction evidence="1">
        <text>N(6)-dimethylallyladenosine(37) in tRNA + (sulfur carrier)-SH + AH2 + 2 S-adenosyl-L-methionine = 2-methylsulfanyl-N(6)-dimethylallyladenosine(37) in tRNA + (sulfur carrier)-H + 5'-deoxyadenosine + L-methionine + A + S-adenosyl-L-homocysteine + 2 H(+)</text>
        <dbReference type="Rhea" id="RHEA:37067"/>
        <dbReference type="Rhea" id="RHEA-COMP:10375"/>
        <dbReference type="Rhea" id="RHEA-COMP:10376"/>
        <dbReference type="Rhea" id="RHEA-COMP:14737"/>
        <dbReference type="Rhea" id="RHEA-COMP:14739"/>
        <dbReference type="ChEBI" id="CHEBI:13193"/>
        <dbReference type="ChEBI" id="CHEBI:15378"/>
        <dbReference type="ChEBI" id="CHEBI:17319"/>
        <dbReference type="ChEBI" id="CHEBI:17499"/>
        <dbReference type="ChEBI" id="CHEBI:29917"/>
        <dbReference type="ChEBI" id="CHEBI:57844"/>
        <dbReference type="ChEBI" id="CHEBI:57856"/>
        <dbReference type="ChEBI" id="CHEBI:59789"/>
        <dbReference type="ChEBI" id="CHEBI:64428"/>
        <dbReference type="ChEBI" id="CHEBI:74415"/>
        <dbReference type="ChEBI" id="CHEBI:74417"/>
        <dbReference type="EC" id="2.8.4.3"/>
    </reaction>
</comment>
<comment type="cofactor">
    <cofactor evidence="1">
        <name>[4Fe-4S] cluster</name>
        <dbReference type="ChEBI" id="CHEBI:49883"/>
    </cofactor>
    <text evidence="1">Binds 2 [4Fe-4S] clusters. One cluster is coordinated with 3 cysteines and an exchangeable S-adenosyl-L-methionine.</text>
</comment>
<comment type="subunit">
    <text evidence="1">Monomer.</text>
</comment>
<comment type="subcellular location">
    <subcellularLocation>
        <location evidence="1">Cytoplasm</location>
    </subcellularLocation>
</comment>
<comment type="similarity">
    <text evidence="1">Belongs to the methylthiotransferase family. MiaB subfamily.</text>
</comment>
<feature type="chain" id="PRO_0000374435" description="tRNA-2-methylthio-N(6)-dimethylallyladenosine synthase">
    <location>
        <begin position="1"/>
        <end position="474"/>
    </location>
</feature>
<feature type="domain" description="MTTase N-terminal" evidence="1">
    <location>
        <begin position="3"/>
        <end position="120"/>
    </location>
</feature>
<feature type="domain" description="Radical SAM core" evidence="2">
    <location>
        <begin position="143"/>
        <end position="375"/>
    </location>
</feature>
<feature type="domain" description="TRAM" evidence="1">
    <location>
        <begin position="378"/>
        <end position="441"/>
    </location>
</feature>
<feature type="binding site" evidence="1">
    <location>
        <position position="12"/>
    </location>
    <ligand>
        <name>[4Fe-4S] cluster</name>
        <dbReference type="ChEBI" id="CHEBI:49883"/>
        <label>1</label>
    </ligand>
</feature>
<feature type="binding site" evidence="1">
    <location>
        <position position="49"/>
    </location>
    <ligand>
        <name>[4Fe-4S] cluster</name>
        <dbReference type="ChEBI" id="CHEBI:49883"/>
        <label>1</label>
    </ligand>
</feature>
<feature type="binding site" evidence="1">
    <location>
        <position position="83"/>
    </location>
    <ligand>
        <name>[4Fe-4S] cluster</name>
        <dbReference type="ChEBI" id="CHEBI:49883"/>
        <label>1</label>
    </ligand>
</feature>
<feature type="binding site" evidence="1">
    <location>
        <position position="157"/>
    </location>
    <ligand>
        <name>[4Fe-4S] cluster</name>
        <dbReference type="ChEBI" id="CHEBI:49883"/>
        <label>2</label>
        <note>4Fe-4S-S-AdoMet</note>
    </ligand>
</feature>
<feature type="binding site" evidence="1">
    <location>
        <position position="161"/>
    </location>
    <ligand>
        <name>[4Fe-4S] cluster</name>
        <dbReference type="ChEBI" id="CHEBI:49883"/>
        <label>2</label>
        <note>4Fe-4S-S-AdoMet</note>
    </ligand>
</feature>
<feature type="binding site" evidence="1">
    <location>
        <position position="164"/>
    </location>
    <ligand>
        <name>[4Fe-4S] cluster</name>
        <dbReference type="ChEBI" id="CHEBI:49883"/>
        <label>2</label>
        <note>4Fe-4S-S-AdoMet</note>
    </ligand>
</feature>
<organism>
    <name type="scientific">Photobacterium profundum (strain SS9)</name>
    <dbReference type="NCBI Taxonomy" id="298386"/>
    <lineage>
        <taxon>Bacteria</taxon>
        <taxon>Pseudomonadati</taxon>
        <taxon>Pseudomonadota</taxon>
        <taxon>Gammaproteobacteria</taxon>
        <taxon>Vibrionales</taxon>
        <taxon>Vibrionaceae</taxon>
        <taxon>Photobacterium</taxon>
    </lineage>
</organism>
<accession>Q6LNA5</accession>
<dbReference type="EC" id="2.8.4.3" evidence="1"/>
<dbReference type="EMBL" id="CR378672">
    <property type="protein sequence ID" value="CAG21221.1"/>
    <property type="molecule type" value="Genomic_DNA"/>
</dbReference>
<dbReference type="RefSeq" id="WP_011219493.1">
    <property type="nucleotide sequence ID" value="NC_006370.1"/>
</dbReference>
<dbReference type="SMR" id="Q6LNA5"/>
<dbReference type="STRING" id="298386.PBPRA2878"/>
<dbReference type="KEGG" id="ppr:PBPRA2878"/>
<dbReference type="eggNOG" id="COG0621">
    <property type="taxonomic scope" value="Bacteria"/>
</dbReference>
<dbReference type="HOGENOM" id="CLU_018697_2_0_6"/>
<dbReference type="Proteomes" id="UP000000593">
    <property type="component" value="Chromosome 1"/>
</dbReference>
<dbReference type="GO" id="GO:0005829">
    <property type="term" value="C:cytosol"/>
    <property type="evidence" value="ECO:0007669"/>
    <property type="project" value="TreeGrafter"/>
</dbReference>
<dbReference type="GO" id="GO:0051539">
    <property type="term" value="F:4 iron, 4 sulfur cluster binding"/>
    <property type="evidence" value="ECO:0007669"/>
    <property type="project" value="UniProtKB-UniRule"/>
</dbReference>
<dbReference type="GO" id="GO:0046872">
    <property type="term" value="F:metal ion binding"/>
    <property type="evidence" value="ECO:0007669"/>
    <property type="project" value="UniProtKB-KW"/>
</dbReference>
<dbReference type="GO" id="GO:0035597">
    <property type="term" value="F:N6-isopentenyladenosine methylthiotransferase activity"/>
    <property type="evidence" value="ECO:0007669"/>
    <property type="project" value="TreeGrafter"/>
</dbReference>
<dbReference type="CDD" id="cd01335">
    <property type="entry name" value="Radical_SAM"/>
    <property type="match status" value="1"/>
</dbReference>
<dbReference type="FunFam" id="3.40.50.12160:FF:000001">
    <property type="entry name" value="tRNA-2-methylthio-N(6)-dimethylallyladenosine synthase"/>
    <property type="match status" value="1"/>
</dbReference>
<dbReference type="FunFam" id="3.80.30.20:FF:000001">
    <property type="entry name" value="tRNA-2-methylthio-N(6)-dimethylallyladenosine synthase 2"/>
    <property type="match status" value="1"/>
</dbReference>
<dbReference type="Gene3D" id="3.40.50.12160">
    <property type="entry name" value="Methylthiotransferase, N-terminal domain"/>
    <property type="match status" value="1"/>
</dbReference>
<dbReference type="Gene3D" id="3.80.30.20">
    <property type="entry name" value="tm_1862 like domain"/>
    <property type="match status" value="1"/>
</dbReference>
<dbReference type="HAMAP" id="MF_01864">
    <property type="entry name" value="tRNA_metthiotr_MiaB"/>
    <property type="match status" value="1"/>
</dbReference>
<dbReference type="InterPro" id="IPR006638">
    <property type="entry name" value="Elp3/MiaA/NifB-like_rSAM"/>
</dbReference>
<dbReference type="InterPro" id="IPR005839">
    <property type="entry name" value="Methylthiotransferase"/>
</dbReference>
<dbReference type="InterPro" id="IPR020612">
    <property type="entry name" value="Methylthiotransferase_CS"/>
</dbReference>
<dbReference type="InterPro" id="IPR013848">
    <property type="entry name" value="Methylthiotransferase_N"/>
</dbReference>
<dbReference type="InterPro" id="IPR038135">
    <property type="entry name" value="Methylthiotransferase_N_sf"/>
</dbReference>
<dbReference type="InterPro" id="IPR006463">
    <property type="entry name" value="MiaB_methiolase"/>
</dbReference>
<dbReference type="InterPro" id="IPR007197">
    <property type="entry name" value="rSAM"/>
</dbReference>
<dbReference type="InterPro" id="IPR023404">
    <property type="entry name" value="rSAM_horseshoe"/>
</dbReference>
<dbReference type="InterPro" id="IPR002792">
    <property type="entry name" value="TRAM_dom"/>
</dbReference>
<dbReference type="NCBIfam" id="TIGR01574">
    <property type="entry name" value="miaB-methiolase"/>
    <property type="match status" value="1"/>
</dbReference>
<dbReference type="NCBIfam" id="TIGR00089">
    <property type="entry name" value="MiaB/RimO family radical SAM methylthiotransferase"/>
    <property type="match status" value="1"/>
</dbReference>
<dbReference type="PANTHER" id="PTHR43020">
    <property type="entry name" value="CDK5 REGULATORY SUBUNIT-ASSOCIATED PROTEIN 1"/>
    <property type="match status" value="1"/>
</dbReference>
<dbReference type="PANTHER" id="PTHR43020:SF2">
    <property type="entry name" value="MITOCHONDRIAL TRNA METHYLTHIOTRANSFERASE CDK5RAP1"/>
    <property type="match status" value="1"/>
</dbReference>
<dbReference type="Pfam" id="PF04055">
    <property type="entry name" value="Radical_SAM"/>
    <property type="match status" value="1"/>
</dbReference>
<dbReference type="Pfam" id="PF01938">
    <property type="entry name" value="TRAM"/>
    <property type="match status" value="1"/>
</dbReference>
<dbReference type="Pfam" id="PF00919">
    <property type="entry name" value="UPF0004"/>
    <property type="match status" value="1"/>
</dbReference>
<dbReference type="SFLD" id="SFLDF00273">
    <property type="entry name" value="(dimethylallyl)adenosine_tRNA"/>
    <property type="match status" value="1"/>
</dbReference>
<dbReference type="SFLD" id="SFLDG01082">
    <property type="entry name" value="B12-binding_domain_containing"/>
    <property type="match status" value="1"/>
</dbReference>
<dbReference type="SFLD" id="SFLDG01061">
    <property type="entry name" value="methylthiotransferase"/>
    <property type="match status" value="1"/>
</dbReference>
<dbReference type="SMART" id="SM00729">
    <property type="entry name" value="Elp3"/>
    <property type="match status" value="1"/>
</dbReference>
<dbReference type="SUPFAM" id="SSF102114">
    <property type="entry name" value="Radical SAM enzymes"/>
    <property type="match status" value="1"/>
</dbReference>
<dbReference type="PROSITE" id="PS51449">
    <property type="entry name" value="MTTASE_N"/>
    <property type="match status" value="1"/>
</dbReference>
<dbReference type="PROSITE" id="PS01278">
    <property type="entry name" value="MTTASE_RADICAL"/>
    <property type="match status" value="1"/>
</dbReference>
<dbReference type="PROSITE" id="PS51918">
    <property type="entry name" value="RADICAL_SAM"/>
    <property type="match status" value="1"/>
</dbReference>
<dbReference type="PROSITE" id="PS50926">
    <property type="entry name" value="TRAM"/>
    <property type="match status" value="1"/>
</dbReference>
<sequence length="474" mass="53863">MPKKLLIKTWGCQMNEYDSSKMADLLNAANGFELTEVPEEADVLLLNTCSIREKAQEKVFHQLGRWKRLKEKKPDLVIGVGGCVATQEGDAIRKRAPYVDVIFGPQTLHRLPQMIKDSQSNHGPVMDISFPEVEKFDNLPEPRADGVTAFVSIMEGCSKYCTYCVVPYTRGEEVSRPIDDVLYEVAQLAEQGVREVNLLGQNVNAFRGPTHDGEMASFAELLRLVAAIDGIDRIRYTTSHPIEFTDDIIEVYTDTPELVNYLHLPVQSGSDRILTMMKRPHTVLEYKSKIRKLRKVRPDITMSSDFIVAFPGESDQDFQDTMKLIRDIDFDISYSFVFSPRPGTPAADYPCDISEKVKKERLYELQQQINTQAMRHARQMLNTEQRILVEGPSRKNIMELRGRTENNRIVNFEGSAELIGQFVDVNITDVFTNSLRGELVRTEAEMDLRVAMTPLEVMEKARKEDELGVGVYTP</sequence>